<accession>Q08AY9</accession>
<name>FA89A_XENLA</name>
<reference key="1">
    <citation type="submission" date="2006-10" db="EMBL/GenBank/DDBJ databases">
        <authorList>
            <consortium name="NIH - Xenopus Gene Collection (XGC) project"/>
        </authorList>
    </citation>
    <scope>NUCLEOTIDE SEQUENCE [LARGE SCALE MRNA]</scope>
    <source>
        <tissue>Embryo</tissue>
    </source>
</reference>
<comment type="similarity">
    <text evidence="1">Belongs to the FAM89 family.</text>
</comment>
<proteinExistence type="evidence at transcript level"/>
<feature type="chain" id="PRO_0000358922" description="Protein FAM89A">
    <location>
        <begin position="1"/>
        <end position="166"/>
    </location>
</feature>
<keyword id="KW-1185">Reference proteome</keyword>
<evidence type="ECO:0000305" key="1"/>
<sequence>MSGSHTAIAPLAPCMEGLPPLPKSLSGLLNSSGGSGWRDLERVYAQKSRIQDDLSRGGTSGSVQAHPKPPNLDAALALLRKEMVGLRQLDMSLLCQLYSLYESIQEYKGACQAASSADCTYAMENGFFDEEEEYYQEAGSLHKIGRENSEGTVSPISNEDWILENI</sequence>
<gene>
    <name type="primary">fam89a</name>
</gene>
<protein>
    <recommendedName>
        <fullName>Protein FAM89A</fullName>
    </recommendedName>
</protein>
<dbReference type="EMBL" id="BC124949">
    <property type="protein sequence ID" value="AAI24950.1"/>
    <property type="molecule type" value="mRNA"/>
</dbReference>
<dbReference type="RefSeq" id="NP_001121297.1">
    <property type="nucleotide sequence ID" value="NM_001127825.1"/>
</dbReference>
<dbReference type="SMR" id="Q08AY9"/>
<dbReference type="DNASU" id="100158381"/>
<dbReference type="GeneID" id="100158381"/>
<dbReference type="KEGG" id="xla:100158381"/>
<dbReference type="AGR" id="Xenbase:XB-GENE-5796287"/>
<dbReference type="CTD" id="100158381"/>
<dbReference type="Xenbase" id="XB-GENE-5796287">
    <property type="gene designation" value="fam89a.L"/>
</dbReference>
<dbReference type="OMA" id="NNWNLYG"/>
<dbReference type="OrthoDB" id="1681166at2759"/>
<dbReference type="Proteomes" id="UP000186698">
    <property type="component" value="Chromosome 5L"/>
</dbReference>
<dbReference type="Bgee" id="100158381">
    <property type="expression patterns" value="Expressed in internal ear and 18 other cell types or tissues"/>
</dbReference>
<dbReference type="PANTHER" id="PTHR46949">
    <property type="entry name" value="LEUCINE REPEAT ADAPTER PROTEIN 25"/>
    <property type="match status" value="1"/>
</dbReference>
<dbReference type="PANTHER" id="PTHR46949:SF3">
    <property type="entry name" value="PROTEIN FAM89A"/>
    <property type="match status" value="1"/>
</dbReference>
<organism>
    <name type="scientific">Xenopus laevis</name>
    <name type="common">African clawed frog</name>
    <dbReference type="NCBI Taxonomy" id="8355"/>
    <lineage>
        <taxon>Eukaryota</taxon>
        <taxon>Metazoa</taxon>
        <taxon>Chordata</taxon>
        <taxon>Craniata</taxon>
        <taxon>Vertebrata</taxon>
        <taxon>Euteleostomi</taxon>
        <taxon>Amphibia</taxon>
        <taxon>Batrachia</taxon>
        <taxon>Anura</taxon>
        <taxon>Pipoidea</taxon>
        <taxon>Pipidae</taxon>
        <taxon>Xenopodinae</taxon>
        <taxon>Xenopus</taxon>
        <taxon>Xenopus</taxon>
    </lineage>
</organism>